<accession>Q92TD0</accession>
<keyword id="KW-0028">Amino-acid biosynthesis</keyword>
<keyword id="KW-0057">Aromatic amino acid biosynthesis</keyword>
<keyword id="KW-0413">Isomerase</keyword>
<keyword id="KW-1185">Reference proteome</keyword>
<keyword id="KW-0822">Tryptophan biosynthesis</keyword>
<organism>
    <name type="scientific">Rhizobium meliloti (strain 1021)</name>
    <name type="common">Ensifer meliloti</name>
    <name type="synonym">Sinorhizobium meliloti</name>
    <dbReference type="NCBI Taxonomy" id="266834"/>
    <lineage>
        <taxon>Bacteria</taxon>
        <taxon>Pseudomonadati</taxon>
        <taxon>Pseudomonadota</taxon>
        <taxon>Alphaproteobacteria</taxon>
        <taxon>Hyphomicrobiales</taxon>
        <taxon>Rhizobiaceae</taxon>
        <taxon>Sinorhizobium/Ensifer group</taxon>
        <taxon>Sinorhizobium</taxon>
    </lineage>
</organism>
<name>TRPF_RHIME</name>
<gene>
    <name evidence="1" type="primary">trpF</name>
    <name type="ordered locus">R00027</name>
    <name type="ORF">SMc02767</name>
</gene>
<feature type="chain" id="PRO_0000154374" description="N-(5'-phosphoribosyl)anthranilate isomerase">
    <location>
        <begin position="1"/>
        <end position="215"/>
    </location>
</feature>
<protein>
    <recommendedName>
        <fullName evidence="1">N-(5'-phosphoribosyl)anthranilate isomerase</fullName>
        <shortName evidence="1">PRAI</shortName>
        <ecNumber evidence="1">5.3.1.24</ecNumber>
    </recommendedName>
</protein>
<comment type="catalytic activity">
    <reaction evidence="1">
        <text>N-(5-phospho-beta-D-ribosyl)anthranilate = 1-(2-carboxyphenylamino)-1-deoxy-D-ribulose 5-phosphate</text>
        <dbReference type="Rhea" id="RHEA:21540"/>
        <dbReference type="ChEBI" id="CHEBI:18277"/>
        <dbReference type="ChEBI" id="CHEBI:58613"/>
        <dbReference type="EC" id="5.3.1.24"/>
    </reaction>
</comment>
<comment type="pathway">
    <text evidence="1">Amino-acid biosynthesis; L-tryptophan biosynthesis; L-tryptophan from chorismate: step 3/5.</text>
</comment>
<comment type="similarity">
    <text evidence="1">Belongs to the TrpF family.</text>
</comment>
<evidence type="ECO:0000255" key="1">
    <source>
        <dbReference type="HAMAP-Rule" id="MF_00135"/>
    </source>
</evidence>
<proteinExistence type="inferred from homology"/>
<sequence>MKTEVKICGLKTAEAVERAVALGASHVGFIFFPKSPRNIEPDDAGRLAARARGRAKIVAVTVDADNDGLDEIVSALDPDVLQLHGSETPERVLSIKALYGLPVMKALAVREASDLERIDPYLGIVDRFLLDAKPPAGSDLPGGNGISFDWRLLDALDGSVDYMLSGGLNAGNIADALALTGARAIDTSSGVESAPGIKDLTLMEAFFEAVRRAEA</sequence>
<reference key="1">
    <citation type="journal article" date="2001" name="Proc. Natl. Acad. Sci. U.S.A.">
        <title>Analysis of the chromosome sequence of the legume symbiont Sinorhizobium meliloti strain 1021.</title>
        <authorList>
            <person name="Capela D."/>
            <person name="Barloy-Hubler F."/>
            <person name="Gouzy J."/>
            <person name="Bothe G."/>
            <person name="Ampe F."/>
            <person name="Batut J."/>
            <person name="Boistard P."/>
            <person name="Becker A."/>
            <person name="Boutry M."/>
            <person name="Cadieu E."/>
            <person name="Dreano S."/>
            <person name="Gloux S."/>
            <person name="Godrie T."/>
            <person name="Goffeau A."/>
            <person name="Kahn D."/>
            <person name="Kiss E."/>
            <person name="Lelaure V."/>
            <person name="Masuy D."/>
            <person name="Pohl T."/>
            <person name="Portetelle D."/>
            <person name="Puehler A."/>
            <person name="Purnelle B."/>
            <person name="Ramsperger U."/>
            <person name="Renard C."/>
            <person name="Thebault P."/>
            <person name="Vandenbol M."/>
            <person name="Weidner S."/>
            <person name="Galibert F."/>
        </authorList>
    </citation>
    <scope>NUCLEOTIDE SEQUENCE [LARGE SCALE GENOMIC DNA]</scope>
    <source>
        <strain>1021</strain>
    </source>
</reference>
<reference key="2">
    <citation type="journal article" date="2001" name="Science">
        <title>The composite genome of the legume symbiont Sinorhizobium meliloti.</title>
        <authorList>
            <person name="Galibert F."/>
            <person name="Finan T.M."/>
            <person name="Long S.R."/>
            <person name="Puehler A."/>
            <person name="Abola P."/>
            <person name="Ampe F."/>
            <person name="Barloy-Hubler F."/>
            <person name="Barnett M.J."/>
            <person name="Becker A."/>
            <person name="Boistard P."/>
            <person name="Bothe G."/>
            <person name="Boutry M."/>
            <person name="Bowser L."/>
            <person name="Buhrmester J."/>
            <person name="Cadieu E."/>
            <person name="Capela D."/>
            <person name="Chain P."/>
            <person name="Cowie A."/>
            <person name="Davis R.W."/>
            <person name="Dreano S."/>
            <person name="Federspiel N.A."/>
            <person name="Fisher R.F."/>
            <person name="Gloux S."/>
            <person name="Godrie T."/>
            <person name="Goffeau A."/>
            <person name="Golding B."/>
            <person name="Gouzy J."/>
            <person name="Gurjal M."/>
            <person name="Hernandez-Lucas I."/>
            <person name="Hong A."/>
            <person name="Huizar L."/>
            <person name="Hyman R.W."/>
            <person name="Jones T."/>
            <person name="Kahn D."/>
            <person name="Kahn M.L."/>
            <person name="Kalman S."/>
            <person name="Keating D.H."/>
            <person name="Kiss E."/>
            <person name="Komp C."/>
            <person name="Lelaure V."/>
            <person name="Masuy D."/>
            <person name="Palm C."/>
            <person name="Peck M.C."/>
            <person name="Pohl T.M."/>
            <person name="Portetelle D."/>
            <person name="Purnelle B."/>
            <person name="Ramsperger U."/>
            <person name="Surzycki R."/>
            <person name="Thebault P."/>
            <person name="Vandenbol M."/>
            <person name="Vorhoelter F.J."/>
            <person name="Weidner S."/>
            <person name="Wells D.H."/>
            <person name="Wong K."/>
            <person name="Yeh K.-C."/>
            <person name="Batut J."/>
        </authorList>
    </citation>
    <scope>NUCLEOTIDE SEQUENCE [LARGE SCALE GENOMIC DNA]</scope>
    <source>
        <strain>1021</strain>
    </source>
</reference>
<dbReference type="EC" id="5.3.1.24" evidence="1"/>
<dbReference type="EMBL" id="AL591688">
    <property type="protein sequence ID" value="CAC41414.1"/>
    <property type="molecule type" value="Genomic_DNA"/>
</dbReference>
<dbReference type="RefSeq" id="NP_384133.1">
    <property type="nucleotide sequence ID" value="NC_003047.1"/>
</dbReference>
<dbReference type="RefSeq" id="WP_003536445.1">
    <property type="nucleotide sequence ID" value="NC_003047.1"/>
</dbReference>
<dbReference type="SMR" id="Q92TD0"/>
<dbReference type="EnsemblBacteria" id="CAC41414">
    <property type="protein sequence ID" value="CAC41414"/>
    <property type="gene ID" value="SMc02767"/>
</dbReference>
<dbReference type="KEGG" id="sme:SMc02767"/>
<dbReference type="PATRIC" id="fig|266834.11.peg.1380"/>
<dbReference type="eggNOG" id="COG0135">
    <property type="taxonomic scope" value="Bacteria"/>
</dbReference>
<dbReference type="HOGENOM" id="CLU_076364_1_1_5"/>
<dbReference type="OrthoDB" id="9796196at2"/>
<dbReference type="UniPathway" id="UPA00035">
    <property type="reaction ID" value="UER00042"/>
</dbReference>
<dbReference type="Proteomes" id="UP000001976">
    <property type="component" value="Chromosome"/>
</dbReference>
<dbReference type="GO" id="GO:0004640">
    <property type="term" value="F:phosphoribosylanthranilate isomerase activity"/>
    <property type="evidence" value="ECO:0007669"/>
    <property type="project" value="UniProtKB-UniRule"/>
</dbReference>
<dbReference type="GO" id="GO:0000162">
    <property type="term" value="P:L-tryptophan biosynthetic process"/>
    <property type="evidence" value="ECO:0007669"/>
    <property type="project" value="UniProtKB-UniRule"/>
</dbReference>
<dbReference type="CDD" id="cd00405">
    <property type="entry name" value="PRAI"/>
    <property type="match status" value="1"/>
</dbReference>
<dbReference type="Gene3D" id="3.20.20.70">
    <property type="entry name" value="Aldolase class I"/>
    <property type="match status" value="1"/>
</dbReference>
<dbReference type="HAMAP" id="MF_00135">
    <property type="entry name" value="PRAI"/>
    <property type="match status" value="1"/>
</dbReference>
<dbReference type="InterPro" id="IPR013785">
    <property type="entry name" value="Aldolase_TIM"/>
</dbReference>
<dbReference type="InterPro" id="IPR001240">
    <property type="entry name" value="PRAI_dom"/>
</dbReference>
<dbReference type="InterPro" id="IPR011060">
    <property type="entry name" value="RibuloseP-bd_barrel"/>
</dbReference>
<dbReference type="InterPro" id="IPR044643">
    <property type="entry name" value="TrpF_fam"/>
</dbReference>
<dbReference type="NCBIfam" id="NF002295">
    <property type="entry name" value="PRK01222.1-1"/>
    <property type="match status" value="1"/>
</dbReference>
<dbReference type="PANTHER" id="PTHR42894">
    <property type="entry name" value="N-(5'-PHOSPHORIBOSYL)ANTHRANILATE ISOMERASE"/>
    <property type="match status" value="1"/>
</dbReference>
<dbReference type="PANTHER" id="PTHR42894:SF1">
    <property type="entry name" value="N-(5'-PHOSPHORIBOSYL)ANTHRANILATE ISOMERASE"/>
    <property type="match status" value="1"/>
</dbReference>
<dbReference type="Pfam" id="PF00697">
    <property type="entry name" value="PRAI"/>
    <property type="match status" value="1"/>
</dbReference>
<dbReference type="SUPFAM" id="SSF51366">
    <property type="entry name" value="Ribulose-phoshate binding barrel"/>
    <property type="match status" value="1"/>
</dbReference>